<keyword id="KW-0167">Capsid protein</keyword>
<keyword id="KW-0903">Direct protein sequencing</keyword>
<keyword id="KW-1035">Host cytoplasm</keyword>
<keyword id="KW-1152">Outer capsid protein</keyword>
<keyword id="KW-1185">Reference proteome</keyword>
<keyword id="KW-0946">Virion</keyword>
<reference key="1">
    <citation type="journal article" date="1991" name="J. Gen. Virol.">
        <title>Nucleotide sequences of genome segments S8, encoding a capsid protein, and S10, encoding a 36K protein, of rice gall dwarf virus.</title>
        <authorList>
            <person name="Noda H."/>
            <person name="Ishikawa K."/>
            <person name="Hibino H."/>
            <person name="Kato H."/>
            <person name="Omura T."/>
        </authorList>
    </citation>
    <scope>NUCLEOTIDE SEQUENCE [GENOMIC RNA]</scope>
    <scope>PARTIAL PROTEIN SEQUENCE</scope>
</reference>
<organismHost>
    <name type="scientific">Nephotettix cincticeps</name>
    <name type="common">Green rice leafhopper</name>
    <name type="synonym">Selenocephalus cincticeps</name>
    <dbReference type="NCBI Taxonomy" id="94400"/>
</organismHost>
<organismHost>
    <name type="scientific">Oryza sativa</name>
    <name type="common">Rice</name>
    <dbReference type="NCBI Taxonomy" id="4530"/>
</organismHost>
<evidence type="ECO:0000250" key="1"/>
<evidence type="ECO:0000305" key="2"/>
<accession>P29077</accession>
<sequence>MSRQAWIETSALIECISEYGTKCSFDTFQGLTINDISTLSNLMNQISVASVGFLNDPRTPLQAMSCEFVNFISTADRHAYMLQKNWFDSDVAPNVTTDNFIATYIKPRFSRTVSDVLRQVNNFALQPMENPKLISRQLGVLKAYDIPYSTPINPMDVARSSANVVGNVSQRRALSTPLIQGAQNVTFIVSESDKIIFGTRSLNPIAPGNFQINVPPWYSDLNVVDARIYFTNSFLGCTIQNVQVNAVNGNDPVATITVPTDNNPFIVDSDSVVSLSLSGGAINVTTAVNLTGYAIAIEGKFNMQMNASPSYYTLSSLTIQTSVIDDFGLSAFLEPFRIRLRASGQTEIFSQSMNTLTENLIRQYMPANQAVNIAFVSPWYRFSERARTILTFNQPLLPFASRKLIIRHLWVIMSFIAVFGRYYTVN</sequence>
<dbReference type="EMBL" id="D13410">
    <property type="protein sequence ID" value="BAA02676.1"/>
    <property type="molecule type" value="Genomic_RNA"/>
</dbReference>
<dbReference type="PIR" id="JQ1308">
    <property type="entry name" value="MWXRRG"/>
</dbReference>
<dbReference type="RefSeq" id="YP_001111366.1">
    <property type="nucleotide sequence ID" value="NC_009241.1"/>
</dbReference>
<dbReference type="SMR" id="P29077"/>
<dbReference type="GeneID" id="5075719"/>
<dbReference type="KEGG" id="vg:5075719"/>
<dbReference type="OrthoDB" id="9520at10239"/>
<dbReference type="Proteomes" id="UP000006720">
    <property type="component" value="Genome"/>
</dbReference>
<dbReference type="GO" id="GO:0030430">
    <property type="term" value="C:host cell cytoplasm"/>
    <property type="evidence" value="ECO:0007669"/>
    <property type="project" value="UniProtKB-SubCell"/>
</dbReference>
<dbReference type="GO" id="GO:0019031">
    <property type="term" value="C:viral envelope"/>
    <property type="evidence" value="ECO:0007669"/>
    <property type="project" value="InterPro"/>
</dbReference>
<dbReference type="GO" id="GO:0039624">
    <property type="term" value="C:viral outer capsid"/>
    <property type="evidence" value="ECO:0007669"/>
    <property type="project" value="UniProtKB-KW"/>
</dbReference>
<dbReference type="GO" id="GO:0046789">
    <property type="term" value="F:host cell surface receptor binding"/>
    <property type="evidence" value="ECO:0007669"/>
    <property type="project" value="InterPro"/>
</dbReference>
<dbReference type="GO" id="GO:0005198">
    <property type="term" value="F:structural molecule activity"/>
    <property type="evidence" value="ECO:0007669"/>
    <property type="project" value="InterPro"/>
</dbReference>
<dbReference type="GO" id="GO:0019064">
    <property type="term" value="P:fusion of virus membrane with host plasma membrane"/>
    <property type="evidence" value="ECO:0007669"/>
    <property type="project" value="InterPro"/>
</dbReference>
<dbReference type="Gene3D" id="2.60.120.170">
    <property type="match status" value="1"/>
</dbReference>
<dbReference type="InterPro" id="IPR008980">
    <property type="entry name" value="Capsid_hemagglutn"/>
</dbReference>
<dbReference type="InterPro" id="IPR009807">
    <property type="entry name" value="Phytoreo_P8"/>
</dbReference>
<dbReference type="InterPro" id="IPR008935">
    <property type="entry name" value="Virus_capsid_a-hlx_vir"/>
</dbReference>
<dbReference type="Pfam" id="PF07124">
    <property type="entry name" value="Phytoreo_P8"/>
    <property type="match status" value="1"/>
</dbReference>
<dbReference type="SUPFAM" id="SSF48345">
    <property type="entry name" value="A virus capsid protein alpha-helical domain"/>
    <property type="match status" value="1"/>
</dbReference>
<dbReference type="SUPFAM" id="SSF49818">
    <property type="entry name" value="Viral protein domain"/>
    <property type="match status" value="1"/>
</dbReference>
<proteinExistence type="evidence at protein level"/>
<comment type="function">
    <text>Capsid protein which self-assembles to form the outer icosahedral capsid with a T=13 symmetry, about 70 nm in diameter and consisting of 260 P8 trimers. Mediates the secretion of assembled virus-like particles from host insect cells.</text>
</comment>
<comment type="subunit">
    <text evidence="1">Homotrimer. Homomultimer.</text>
</comment>
<comment type="subcellular location">
    <subcellularLocation>
        <location evidence="2">Virion</location>
    </subcellularLocation>
    <subcellularLocation>
        <location evidence="1">Host cytoplasm</location>
    </subcellularLocation>
    <text evidence="1">Found in the peripheral regions of spherical cytoplasmic structures, called virus factories, that appear early after infection and are the site of viral replication and packaging.</text>
</comment>
<comment type="similarity">
    <text evidence="2">Belongs to the phytoreovirus outer capsid protein P8 family.</text>
</comment>
<name>P8_RGDV</name>
<organism>
    <name type="scientific">Rice gall dwarf virus</name>
    <name type="common">RGDV</name>
    <dbReference type="NCBI Taxonomy" id="10986"/>
    <lineage>
        <taxon>Viruses</taxon>
        <taxon>Riboviria</taxon>
        <taxon>Orthornavirae</taxon>
        <taxon>Duplornaviricota</taxon>
        <taxon>Resentoviricetes</taxon>
        <taxon>Reovirales</taxon>
        <taxon>Sedoreoviridae</taxon>
        <taxon>Phytoreovirus</taxon>
    </lineage>
</organism>
<protein>
    <recommendedName>
        <fullName>Outer capsid protein P8</fullName>
    </recommendedName>
    <alternativeName>
        <fullName>Structural protein P8</fullName>
    </alternativeName>
</protein>
<feature type="chain" id="PRO_0000222768" description="Outer capsid protein P8">
    <location>
        <begin position="1"/>
        <end position="426"/>
    </location>
</feature>